<sequence length="714" mass="79683">MPAAAGDGLLGEPAAPGGGGGAEDAARPAAACEGSFLPAWVSGVPRERLRDFQHHKRVGNYLIGSRKLGEGSFAKVREGLHVLTGEKVAIKVIDKKRAKKDTYVTKNLRREGQIQQMIRHPNITQLLDILETENSYYLVMELCPGGNLMHKIYEKKRLEESEARRYIRQLISAVEHLHRAGVVHRDLKIENLLLDEDNNIKLIDFGLSNCAGILGYSDPFSTQCGSPAYAAPELLARKKYGPKIDVWSIGVNMYAMLTGTLPFTVEPFSLRALYQKMVDKEMNPLPTQLSTGAISFLRSLLEPDPVKRPNIQQALANRWLNENYTGKVPCNVTYPNRISLEDLSPSVVLHMTEKLGYKNSDVINTVLSNRACHILAIYFLLNKKLERYLSGKSDIQDSLCYKTRLYQIEKYRAPKESYEASLDTWTRDLEFHAVQDKKPKEQEKRGDFLHRPFSKKLDKNLPSHKQPSGSLMTQIQNTKALLKDRKASKSSFPDKDSFGCRNIFRKTSDSNCVASSSMEFIPVPPPRTPRIVKKPEPHQPGPGSTGIPHKEDPLMLDMVRSFESVDRDDHIEVLSPSHHYRILNSPVSLARRNSSERTLSPGLPSGSMSPLHTPLHPTLVSFAHEDKNSPPKEEGLCSPPPVPSNGPMQPLGSPNCVKSRGRFPMMGIGQMLRKRHQSLQPSADRPLEASLPPLQPLAPVNLAFDMADGVKTQC</sequence>
<proteinExistence type="inferred from homology"/>
<comment type="catalytic activity">
    <reaction>
        <text>L-seryl-[protein] + ATP = O-phospho-L-seryl-[protein] + ADP + H(+)</text>
        <dbReference type="Rhea" id="RHEA:17989"/>
        <dbReference type="Rhea" id="RHEA-COMP:9863"/>
        <dbReference type="Rhea" id="RHEA-COMP:11604"/>
        <dbReference type="ChEBI" id="CHEBI:15378"/>
        <dbReference type="ChEBI" id="CHEBI:29999"/>
        <dbReference type="ChEBI" id="CHEBI:30616"/>
        <dbReference type="ChEBI" id="CHEBI:83421"/>
        <dbReference type="ChEBI" id="CHEBI:456216"/>
        <dbReference type="EC" id="2.7.11.1"/>
    </reaction>
</comment>
<comment type="catalytic activity">
    <reaction>
        <text>L-threonyl-[protein] + ATP = O-phospho-L-threonyl-[protein] + ADP + H(+)</text>
        <dbReference type="Rhea" id="RHEA:46608"/>
        <dbReference type="Rhea" id="RHEA-COMP:11060"/>
        <dbReference type="Rhea" id="RHEA-COMP:11605"/>
        <dbReference type="ChEBI" id="CHEBI:15378"/>
        <dbReference type="ChEBI" id="CHEBI:30013"/>
        <dbReference type="ChEBI" id="CHEBI:30616"/>
        <dbReference type="ChEBI" id="CHEBI:61977"/>
        <dbReference type="ChEBI" id="CHEBI:456216"/>
        <dbReference type="EC" id="2.7.11.1"/>
    </reaction>
</comment>
<comment type="similarity">
    <text evidence="4">Belongs to the protein kinase superfamily. CAMK Ser/Thr protein kinase family. SNF1 subfamily.</text>
</comment>
<reference key="1">
    <citation type="journal article" date="2004" name="Nature">
        <title>DNA sequence and comparative analysis of chimpanzee chromosome 22.</title>
        <authorList>
            <person name="Watanabe H."/>
            <person name="Fujiyama A."/>
            <person name="Hattori M."/>
            <person name="Taylor T.D."/>
            <person name="Toyoda A."/>
            <person name="Kuroki Y."/>
            <person name="Noguchi H."/>
            <person name="BenKahla A."/>
            <person name="Lehrach H."/>
            <person name="Sudbrak R."/>
            <person name="Kube M."/>
            <person name="Taenzer S."/>
            <person name="Galgoczy P."/>
            <person name="Platzer M."/>
            <person name="Scharfe M."/>
            <person name="Nordsiek G."/>
            <person name="Bloecker H."/>
            <person name="Hellmann I."/>
            <person name="Khaitovich P."/>
            <person name="Paeaebo S."/>
            <person name="Reinhardt R."/>
            <person name="Zheng H.-J."/>
            <person name="Zhang X.-L."/>
            <person name="Zhu G.-F."/>
            <person name="Wang B.-F."/>
            <person name="Fu G."/>
            <person name="Ren S.-X."/>
            <person name="Zhao G.-P."/>
            <person name="Chen Z."/>
            <person name="Lee Y.-S."/>
            <person name="Cheong J.-E."/>
            <person name="Choi S.-H."/>
            <person name="Wu K.-M."/>
            <person name="Liu T.-T."/>
            <person name="Hsiao K.-J."/>
            <person name="Tsai S.-F."/>
            <person name="Kim C.-G."/>
            <person name="Oota S."/>
            <person name="Kitano T."/>
            <person name="Kohara Y."/>
            <person name="Saitou N."/>
            <person name="Park H.-S."/>
            <person name="Wang S.-Y."/>
            <person name="Yaspo M.-L."/>
            <person name="Sakaki Y."/>
        </authorList>
    </citation>
    <scope>NUCLEOTIDE SEQUENCE [LARGE SCALE GENOMIC DNA]</scope>
</reference>
<gene>
    <name type="primary">HUNK</name>
</gene>
<accession>Q68UT7</accession>
<name>HUNK_PANTR</name>
<evidence type="ECO:0000255" key="1">
    <source>
        <dbReference type="PROSITE-ProRule" id="PRU00159"/>
    </source>
</evidence>
<evidence type="ECO:0000255" key="2">
    <source>
        <dbReference type="PROSITE-ProRule" id="PRU10027"/>
    </source>
</evidence>
<evidence type="ECO:0000256" key="3">
    <source>
        <dbReference type="SAM" id="MobiDB-lite"/>
    </source>
</evidence>
<evidence type="ECO:0000305" key="4"/>
<protein>
    <recommendedName>
        <fullName>Hormonally up-regulated neu tumor-associated kinase</fullName>
        <ecNumber>2.7.11.1</ecNumber>
    </recommendedName>
</protein>
<organism>
    <name type="scientific">Pan troglodytes</name>
    <name type="common">Chimpanzee</name>
    <dbReference type="NCBI Taxonomy" id="9598"/>
    <lineage>
        <taxon>Eukaryota</taxon>
        <taxon>Metazoa</taxon>
        <taxon>Chordata</taxon>
        <taxon>Craniata</taxon>
        <taxon>Vertebrata</taxon>
        <taxon>Euteleostomi</taxon>
        <taxon>Mammalia</taxon>
        <taxon>Eutheria</taxon>
        <taxon>Euarchontoglires</taxon>
        <taxon>Primates</taxon>
        <taxon>Haplorrhini</taxon>
        <taxon>Catarrhini</taxon>
        <taxon>Hominidae</taxon>
        <taxon>Pan</taxon>
    </lineage>
</organism>
<dbReference type="EC" id="2.7.11.1"/>
<dbReference type="EMBL" id="AL954201">
    <property type="protein sequence ID" value="CAH18570.1"/>
    <property type="molecule type" value="Genomic_DNA"/>
</dbReference>
<dbReference type="RefSeq" id="NP_001065290.1">
    <property type="nucleotide sequence ID" value="NM_001071822.1"/>
</dbReference>
<dbReference type="SMR" id="Q68UT7"/>
<dbReference type="FunCoup" id="Q68UT7">
    <property type="interactions" value="852"/>
</dbReference>
<dbReference type="STRING" id="9598.ENSPTRP00000023839"/>
<dbReference type="PaxDb" id="9598-ENSPTRP00000023839"/>
<dbReference type="Ensembl" id="ENSPTRT00000025828.3">
    <property type="protein sequence ID" value="ENSPTRP00000023839.2"/>
    <property type="gene ID" value="ENSPTRG00000013849.6"/>
</dbReference>
<dbReference type="GeneID" id="746122"/>
<dbReference type="KEGG" id="ptr:746122"/>
<dbReference type="CTD" id="30811"/>
<dbReference type="VGNC" id="VGNC:1149">
    <property type="gene designation" value="HUNK"/>
</dbReference>
<dbReference type="eggNOG" id="KOG0583">
    <property type="taxonomic scope" value="Eukaryota"/>
</dbReference>
<dbReference type="GeneTree" id="ENSGT00940000161070"/>
<dbReference type="HOGENOM" id="CLU_017161_0_0_1"/>
<dbReference type="InParanoid" id="Q68UT7"/>
<dbReference type="OMA" id="HQYRMLS"/>
<dbReference type="OrthoDB" id="6160at9604"/>
<dbReference type="TreeFam" id="TF352373"/>
<dbReference type="Proteomes" id="UP000002277">
    <property type="component" value="Chromosome 21"/>
</dbReference>
<dbReference type="Proteomes" id="UP000243858">
    <property type="component" value="Chromosome 22"/>
</dbReference>
<dbReference type="Bgee" id="ENSPTRG00000013849">
    <property type="expression patterns" value="Expressed in Brodmann (1909) area 10 and 15 other cell types or tissues"/>
</dbReference>
<dbReference type="GO" id="GO:0005737">
    <property type="term" value="C:cytoplasm"/>
    <property type="evidence" value="ECO:0000318"/>
    <property type="project" value="GO_Central"/>
</dbReference>
<dbReference type="GO" id="GO:0005524">
    <property type="term" value="F:ATP binding"/>
    <property type="evidence" value="ECO:0007669"/>
    <property type="project" value="UniProtKB-KW"/>
</dbReference>
<dbReference type="GO" id="GO:0106310">
    <property type="term" value="F:protein serine kinase activity"/>
    <property type="evidence" value="ECO:0007669"/>
    <property type="project" value="RHEA"/>
</dbReference>
<dbReference type="GO" id="GO:0004674">
    <property type="term" value="F:protein serine/threonine kinase activity"/>
    <property type="evidence" value="ECO:0000318"/>
    <property type="project" value="GO_Central"/>
</dbReference>
<dbReference type="GO" id="GO:0035556">
    <property type="term" value="P:intracellular signal transduction"/>
    <property type="evidence" value="ECO:0000318"/>
    <property type="project" value="GO_Central"/>
</dbReference>
<dbReference type="CDD" id="cd14070">
    <property type="entry name" value="STKc_HUNK"/>
    <property type="match status" value="1"/>
</dbReference>
<dbReference type="FunFam" id="1.10.510.10:FF:000391">
    <property type="entry name" value="Hormonally up-regulated neu tumor-associated kinase"/>
    <property type="match status" value="1"/>
</dbReference>
<dbReference type="FunFam" id="3.30.200.20:FF:000003">
    <property type="entry name" value="Non-specific serine/threonine protein kinase"/>
    <property type="match status" value="1"/>
</dbReference>
<dbReference type="Gene3D" id="1.10.510.10">
    <property type="entry name" value="Transferase(Phosphotransferase) domain 1"/>
    <property type="match status" value="1"/>
</dbReference>
<dbReference type="InterPro" id="IPR034671">
    <property type="entry name" value="Hunk"/>
</dbReference>
<dbReference type="InterPro" id="IPR011009">
    <property type="entry name" value="Kinase-like_dom_sf"/>
</dbReference>
<dbReference type="InterPro" id="IPR000719">
    <property type="entry name" value="Prot_kinase_dom"/>
</dbReference>
<dbReference type="InterPro" id="IPR017441">
    <property type="entry name" value="Protein_kinase_ATP_BS"/>
</dbReference>
<dbReference type="InterPro" id="IPR008271">
    <property type="entry name" value="Ser/Thr_kinase_AS"/>
</dbReference>
<dbReference type="PANTHER" id="PTHR24346:SF80">
    <property type="entry name" value="HORMONALLY UP-REGULATED NEU TUMOR-ASSOCIATED KINASE"/>
    <property type="match status" value="1"/>
</dbReference>
<dbReference type="PANTHER" id="PTHR24346">
    <property type="entry name" value="MAP/MICROTUBULE AFFINITY-REGULATING KINASE"/>
    <property type="match status" value="1"/>
</dbReference>
<dbReference type="Pfam" id="PF00069">
    <property type="entry name" value="Pkinase"/>
    <property type="match status" value="1"/>
</dbReference>
<dbReference type="SMART" id="SM00220">
    <property type="entry name" value="S_TKc"/>
    <property type="match status" value="1"/>
</dbReference>
<dbReference type="SUPFAM" id="SSF56112">
    <property type="entry name" value="Protein kinase-like (PK-like)"/>
    <property type="match status" value="1"/>
</dbReference>
<dbReference type="PROSITE" id="PS00107">
    <property type="entry name" value="PROTEIN_KINASE_ATP"/>
    <property type="match status" value="1"/>
</dbReference>
<dbReference type="PROSITE" id="PS50011">
    <property type="entry name" value="PROTEIN_KINASE_DOM"/>
    <property type="match status" value="1"/>
</dbReference>
<dbReference type="PROSITE" id="PS00108">
    <property type="entry name" value="PROTEIN_KINASE_ST"/>
    <property type="match status" value="1"/>
</dbReference>
<keyword id="KW-0067">ATP-binding</keyword>
<keyword id="KW-0418">Kinase</keyword>
<keyword id="KW-0547">Nucleotide-binding</keyword>
<keyword id="KW-1185">Reference proteome</keyword>
<keyword id="KW-0723">Serine/threonine-protein kinase</keyword>
<keyword id="KW-0808">Transferase</keyword>
<feature type="chain" id="PRO_0000086006" description="Hormonally up-regulated neu tumor-associated kinase">
    <location>
        <begin position="1"/>
        <end position="714"/>
    </location>
</feature>
<feature type="domain" description="Protein kinase" evidence="1">
    <location>
        <begin position="62"/>
        <end position="320"/>
    </location>
</feature>
<feature type="region of interest" description="Disordered" evidence="3">
    <location>
        <begin position="1"/>
        <end position="26"/>
    </location>
</feature>
<feature type="region of interest" description="Disordered" evidence="3">
    <location>
        <begin position="437"/>
        <end position="471"/>
    </location>
</feature>
<feature type="region of interest" description="Disordered" evidence="3">
    <location>
        <begin position="518"/>
        <end position="552"/>
    </location>
</feature>
<feature type="region of interest" description="Disordered" evidence="3">
    <location>
        <begin position="590"/>
        <end position="660"/>
    </location>
</feature>
<feature type="compositionally biased region" description="Low complexity" evidence="3">
    <location>
        <begin position="1"/>
        <end position="15"/>
    </location>
</feature>
<feature type="compositionally biased region" description="Basic and acidic residues" evidence="3">
    <location>
        <begin position="437"/>
        <end position="461"/>
    </location>
</feature>
<feature type="compositionally biased region" description="Low complexity" evidence="3">
    <location>
        <begin position="599"/>
        <end position="611"/>
    </location>
</feature>
<feature type="compositionally biased region" description="Basic and acidic residues" evidence="3">
    <location>
        <begin position="623"/>
        <end position="635"/>
    </location>
</feature>
<feature type="active site" description="Proton acceptor" evidence="1 2">
    <location>
        <position position="186"/>
    </location>
</feature>
<feature type="binding site" evidence="1">
    <location>
        <begin position="68"/>
        <end position="76"/>
    </location>
    <ligand>
        <name>ATP</name>
        <dbReference type="ChEBI" id="CHEBI:30616"/>
    </ligand>
</feature>
<feature type="binding site" evidence="1">
    <location>
        <position position="91"/>
    </location>
    <ligand>
        <name>ATP</name>
        <dbReference type="ChEBI" id="CHEBI:30616"/>
    </ligand>
</feature>